<proteinExistence type="inferred from homology"/>
<comment type="function">
    <text evidence="1">May reduce toxic product malonic semialdehyde to 3-hydroxypropionic acid, which is excreted.</text>
</comment>
<comment type="catalytic activity">
    <reaction evidence="1">
        <text>3-hydroxypropanoate + NADP(+) = 3-oxopropanoate + NADPH + H(+)</text>
        <dbReference type="Rhea" id="RHEA:26438"/>
        <dbReference type="ChEBI" id="CHEBI:15378"/>
        <dbReference type="ChEBI" id="CHEBI:16510"/>
        <dbReference type="ChEBI" id="CHEBI:33190"/>
        <dbReference type="ChEBI" id="CHEBI:57783"/>
        <dbReference type="ChEBI" id="CHEBI:58349"/>
        <dbReference type="EC" id="1.1.1.298"/>
    </reaction>
</comment>
<comment type="cofactor">
    <cofactor evidence="1">
        <name>FMN</name>
        <dbReference type="ChEBI" id="CHEBI:58210"/>
    </cofactor>
</comment>
<comment type="induction">
    <text evidence="1">Up-regulated by the nitrogen regulatory protein C (NtrC also called GlnG) and repressed by RutR.</text>
</comment>
<comment type="similarity">
    <text evidence="1">Belongs to the nitroreductase family. HadB/RutE subfamily.</text>
</comment>
<gene>
    <name evidence="1" type="primary">rutE</name>
    <name type="ordered locus">SSON_1026</name>
</gene>
<accession>Q3Z3A5</accession>
<name>RUTE_SHISS</name>
<keyword id="KW-0285">Flavoprotein</keyword>
<keyword id="KW-0288">FMN</keyword>
<keyword id="KW-0520">NAD</keyword>
<keyword id="KW-0521">NADP</keyword>
<keyword id="KW-0560">Oxidoreductase</keyword>
<keyword id="KW-1185">Reference proteome</keyword>
<organism>
    <name type="scientific">Shigella sonnei (strain Ss046)</name>
    <dbReference type="NCBI Taxonomy" id="300269"/>
    <lineage>
        <taxon>Bacteria</taxon>
        <taxon>Pseudomonadati</taxon>
        <taxon>Pseudomonadota</taxon>
        <taxon>Gammaproteobacteria</taxon>
        <taxon>Enterobacterales</taxon>
        <taxon>Enterobacteriaceae</taxon>
        <taxon>Shigella</taxon>
    </lineage>
</organism>
<dbReference type="EC" id="1.1.1.298" evidence="1"/>
<dbReference type="EMBL" id="CP000038">
    <property type="protein sequence ID" value="AAZ87757.1"/>
    <property type="molecule type" value="Genomic_DNA"/>
</dbReference>
<dbReference type="RefSeq" id="WP_001001197.1">
    <property type="nucleotide sequence ID" value="NC_007384.1"/>
</dbReference>
<dbReference type="SMR" id="Q3Z3A5"/>
<dbReference type="KEGG" id="ssn:SSON_1026"/>
<dbReference type="HOGENOM" id="CLU_084441_0_0_6"/>
<dbReference type="Proteomes" id="UP000002529">
    <property type="component" value="Chromosome"/>
</dbReference>
<dbReference type="GO" id="GO:0035527">
    <property type="term" value="F:3-hydroxypropionate dehydrogenase (NADP+) activity"/>
    <property type="evidence" value="ECO:0007669"/>
    <property type="project" value="UniProtKB-UniRule"/>
</dbReference>
<dbReference type="GO" id="GO:0019740">
    <property type="term" value="P:nitrogen utilization"/>
    <property type="evidence" value="ECO:0007669"/>
    <property type="project" value="UniProtKB-UniRule"/>
</dbReference>
<dbReference type="GO" id="GO:0006212">
    <property type="term" value="P:uracil catabolic process"/>
    <property type="evidence" value="ECO:0007669"/>
    <property type="project" value="UniProtKB-UniRule"/>
</dbReference>
<dbReference type="CDD" id="cd02148">
    <property type="entry name" value="RutE-like"/>
    <property type="match status" value="1"/>
</dbReference>
<dbReference type="FunFam" id="3.40.109.10:FF:000003">
    <property type="entry name" value="Probable malonic semialdehyde reductase RutE"/>
    <property type="match status" value="1"/>
</dbReference>
<dbReference type="Gene3D" id="3.40.109.10">
    <property type="entry name" value="NADH Oxidase"/>
    <property type="match status" value="1"/>
</dbReference>
<dbReference type="HAMAP" id="MF_01204">
    <property type="entry name" value="Oxidoreductase_RutE_HadB"/>
    <property type="match status" value="1"/>
</dbReference>
<dbReference type="InterPro" id="IPR029479">
    <property type="entry name" value="Nitroreductase"/>
</dbReference>
<dbReference type="InterPro" id="IPR000415">
    <property type="entry name" value="Nitroreductase-like"/>
</dbReference>
<dbReference type="InterPro" id="IPR050461">
    <property type="entry name" value="Nitroreductase_HadB/RutE"/>
</dbReference>
<dbReference type="InterPro" id="IPR023936">
    <property type="entry name" value="RutE-like"/>
</dbReference>
<dbReference type="NCBIfam" id="NF003768">
    <property type="entry name" value="PRK05365.1"/>
    <property type="match status" value="1"/>
</dbReference>
<dbReference type="PANTHER" id="PTHR43543">
    <property type="entry name" value="MALONIC SEMIALDEHYDE REDUCTASE RUTE-RELATED"/>
    <property type="match status" value="1"/>
</dbReference>
<dbReference type="PANTHER" id="PTHR43543:SF1">
    <property type="entry name" value="MALONIC SEMIALDEHYDE REDUCTASE RUTE-RELATED"/>
    <property type="match status" value="1"/>
</dbReference>
<dbReference type="Pfam" id="PF00881">
    <property type="entry name" value="Nitroreductase"/>
    <property type="match status" value="1"/>
</dbReference>
<dbReference type="SUPFAM" id="SSF55469">
    <property type="entry name" value="FMN-dependent nitroreductase-like"/>
    <property type="match status" value="1"/>
</dbReference>
<protein>
    <recommendedName>
        <fullName evidence="1">Probable malonic semialdehyde reductase RutE</fullName>
        <ecNumber evidence="1">1.1.1.298</ecNumber>
    </recommendedName>
</protein>
<reference key="1">
    <citation type="journal article" date="2005" name="Nucleic Acids Res.">
        <title>Genome dynamics and diversity of Shigella species, the etiologic agents of bacillary dysentery.</title>
        <authorList>
            <person name="Yang F."/>
            <person name="Yang J."/>
            <person name="Zhang X."/>
            <person name="Chen L."/>
            <person name="Jiang Y."/>
            <person name="Yan Y."/>
            <person name="Tang X."/>
            <person name="Wang J."/>
            <person name="Xiong Z."/>
            <person name="Dong J."/>
            <person name="Xue Y."/>
            <person name="Zhu Y."/>
            <person name="Xu X."/>
            <person name="Sun L."/>
            <person name="Chen S."/>
            <person name="Nie H."/>
            <person name="Peng J."/>
            <person name="Xu J."/>
            <person name="Wang Y."/>
            <person name="Yuan Z."/>
            <person name="Wen Y."/>
            <person name="Yao Z."/>
            <person name="Shen Y."/>
            <person name="Qiang B."/>
            <person name="Hou Y."/>
            <person name="Yu J."/>
            <person name="Jin Q."/>
        </authorList>
    </citation>
    <scope>NUCLEOTIDE SEQUENCE [LARGE SCALE GENOMIC DNA]</scope>
    <source>
        <strain>Ss046</strain>
    </source>
</reference>
<feature type="chain" id="PRO_1000066148" description="Probable malonic semialdehyde reductase RutE">
    <location>
        <begin position="1"/>
        <end position="196"/>
    </location>
</feature>
<evidence type="ECO:0000255" key="1">
    <source>
        <dbReference type="HAMAP-Rule" id="MF_01204"/>
    </source>
</evidence>
<sequence>MNEAVSPGALSTLFTDARTHNGWRETPVSDETLRELYAPIKWGPTSANCSPARIVFIRTVEGKERLHPALSSGNLQKTLTAPVTAIVAWDSEFYERLPLLFPHGDARSWFTSSPQLAEETAFRNSSMQAAYLIVACRALGLDTGPMSGFDRQHVDDAFFAGSTLKSNLLINIGYGDSSKLFARLPRLSFEEACGLL</sequence>